<sequence>MKVRPSVKKMCEHCKVVRRKGRVMIICSANPKHKQRQG</sequence>
<keyword id="KW-0687">Ribonucleoprotein</keyword>
<keyword id="KW-0689">Ribosomal protein</keyword>
<dbReference type="EMBL" id="FM177140">
    <property type="protein sequence ID" value="CAQ67714.1"/>
    <property type="molecule type" value="Genomic_DNA"/>
</dbReference>
<dbReference type="SMR" id="B3WAJ5"/>
<dbReference type="KEGG" id="lcb:LCABL_26480"/>
<dbReference type="HOGENOM" id="CLU_135723_6_2_9"/>
<dbReference type="GO" id="GO:0005737">
    <property type="term" value="C:cytoplasm"/>
    <property type="evidence" value="ECO:0007669"/>
    <property type="project" value="UniProtKB-ARBA"/>
</dbReference>
<dbReference type="GO" id="GO:1990904">
    <property type="term" value="C:ribonucleoprotein complex"/>
    <property type="evidence" value="ECO:0007669"/>
    <property type="project" value="UniProtKB-KW"/>
</dbReference>
<dbReference type="GO" id="GO:0005840">
    <property type="term" value="C:ribosome"/>
    <property type="evidence" value="ECO:0007669"/>
    <property type="project" value="UniProtKB-KW"/>
</dbReference>
<dbReference type="GO" id="GO:0003735">
    <property type="term" value="F:structural constituent of ribosome"/>
    <property type="evidence" value="ECO:0007669"/>
    <property type="project" value="InterPro"/>
</dbReference>
<dbReference type="GO" id="GO:0006412">
    <property type="term" value="P:translation"/>
    <property type="evidence" value="ECO:0007669"/>
    <property type="project" value="UniProtKB-UniRule"/>
</dbReference>
<dbReference type="HAMAP" id="MF_00251">
    <property type="entry name" value="Ribosomal_bL36"/>
    <property type="match status" value="1"/>
</dbReference>
<dbReference type="InterPro" id="IPR000473">
    <property type="entry name" value="Ribosomal_bL36"/>
</dbReference>
<dbReference type="InterPro" id="IPR035977">
    <property type="entry name" value="Ribosomal_bL36_sp"/>
</dbReference>
<dbReference type="NCBIfam" id="TIGR01022">
    <property type="entry name" value="rpmJ_bact"/>
    <property type="match status" value="1"/>
</dbReference>
<dbReference type="PANTHER" id="PTHR42888">
    <property type="entry name" value="50S RIBOSOMAL PROTEIN L36, CHLOROPLASTIC"/>
    <property type="match status" value="1"/>
</dbReference>
<dbReference type="PANTHER" id="PTHR42888:SF1">
    <property type="entry name" value="LARGE RIBOSOMAL SUBUNIT PROTEIN BL36C"/>
    <property type="match status" value="1"/>
</dbReference>
<dbReference type="Pfam" id="PF00444">
    <property type="entry name" value="Ribosomal_L36"/>
    <property type="match status" value="1"/>
</dbReference>
<dbReference type="SUPFAM" id="SSF57840">
    <property type="entry name" value="Ribosomal protein L36"/>
    <property type="match status" value="1"/>
</dbReference>
<dbReference type="PROSITE" id="PS00828">
    <property type="entry name" value="RIBOSOMAL_L36"/>
    <property type="match status" value="1"/>
</dbReference>
<feature type="chain" id="PRO_1000101035" description="Large ribosomal subunit protein bL36">
    <location>
        <begin position="1"/>
        <end position="38"/>
    </location>
</feature>
<name>RL36_LACCB</name>
<reference key="1">
    <citation type="submission" date="2008-06" db="EMBL/GenBank/DDBJ databases">
        <title>Lactobacillus casei BL23 complete genome sequence.</title>
        <authorList>
            <person name="Maze A."/>
            <person name="Boel G."/>
            <person name="Bourand A."/>
            <person name="Loux V."/>
            <person name="Gibrat J.F."/>
            <person name="Zuniga M."/>
            <person name="Hartke A."/>
            <person name="Deutscher J."/>
        </authorList>
    </citation>
    <scope>NUCLEOTIDE SEQUENCE [LARGE SCALE GENOMIC DNA]</scope>
    <source>
        <strain>BL23</strain>
    </source>
</reference>
<proteinExistence type="inferred from homology"/>
<comment type="similarity">
    <text evidence="1">Belongs to the bacterial ribosomal protein bL36 family.</text>
</comment>
<evidence type="ECO:0000255" key="1">
    <source>
        <dbReference type="HAMAP-Rule" id="MF_00251"/>
    </source>
</evidence>
<evidence type="ECO:0000305" key="2"/>
<gene>
    <name evidence="1" type="primary">rpmJ</name>
    <name type="ordered locus">LCABL_26480</name>
</gene>
<organism>
    <name type="scientific">Lacticaseibacillus casei (strain BL23)</name>
    <name type="common">Lactobacillus casei</name>
    <dbReference type="NCBI Taxonomy" id="543734"/>
    <lineage>
        <taxon>Bacteria</taxon>
        <taxon>Bacillati</taxon>
        <taxon>Bacillota</taxon>
        <taxon>Bacilli</taxon>
        <taxon>Lactobacillales</taxon>
        <taxon>Lactobacillaceae</taxon>
        <taxon>Lacticaseibacillus</taxon>
    </lineage>
</organism>
<accession>B3WAJ5</accession>
<protein>
    <recommendedName>
        <fullName evidence="1">Large ribosomal subunit protein bL36</fullName>
    </recommendedName>
    <alternativeName>
        <fullName evidence="2">50S ribosomal protein L36</fullName>
    </alternativeName>
</protein>